<organism>
    <name type="scientific">Arabidopsis thaliana</name>
    <name type="common">Mouse-ear cress</name>
    <dbReference type="NCBI Taxonomy" id="3702"/>
    <lineage>
        <taxon>Eukaryota</taxon>
        <taxon>Viridiplantae</taxon>
        <taxon>Streptophyta</taxon>
        <taxon>Embryophyta</taxon>
        <taxon>Tracheophyta</taxon>
        <taxon>Spermatophyta</taxon>
        <taxon>Magnoliopsida</taxon>
        <taxon>eudicotyledons</taxon>
        <taxon>Gunneridae</taxon>
        <taxon>Pentapetalae</taxon>
        <taxon>rosids</taxon>
        <taxon>malvids</taxon>
        <taxon>Brassicales</taxon>
        <taxon>Brassicaceae</taxon>
        <taxon>Camelineae</taxon>
        <taxon>Arabidopsis</taxon>
    </lineage>
</organism>
<feature type="chain" id="PRO_0000402174" description="Vesicle-associated protein 2-2">
    <location>
        <begin position="1"/>
        <end position="386"/>
    </location>
</feature>
<feature type="topological domain" description="Cytoplasmic" evidence="3">
    <location>
        <begin position="1"/>
        <end position="363"/>
    </location>
</feature>
<feature type="transmembrane region" description="Helical; Anchor for type IV membrane protein" evidence="3">
    <location>
        <begin position="364"/>
        <end position="384"/>
    </location>
</feature>
<feature type="domain" description="MSP" evidence="4">
    <location>
        <begin position="5"/>
        <end position="125"/>
    </location>
</feature>
<feature type="coiled-coil region" evidence="3">
    <location>
        <begin position="300"/>
        <end position="353"/>
    </location>
</feature>
<feature type="modified residue" description="N-acetylmethionine" evidence="7">
    <location>
        <position position="1"/>
    </location>
</feature>
<feature type="modified residue" description="Phosphoserine" evidence="2">
    <location>
        <position position="279"/>
    </location>
</feature>
<reference key="1">
    <citation type="journal article" date="2000" name="Nature">
        <title>Sequence and analysis of chromosome 1 of the plant Arabidopsis thaliana.</title>
        <authorList>
            <person name="Theologis A."/>
            <person name="Ecker J.R."/>
            <person name="Palm C.J."/>
            <person name="Federspiel N.A."/>
            <person name="Kaul S."/>
            <person name="White O."/>
            <person name="Alonso J."/>
            <person name="Altafi H."/>
            <person name="Araujo R."/>
            <person name="Bowman C.L."/>
            <person name="Brooks S.Y."/>
            <person name="Buehler E."/>
            <person name="Chan A."/>
            <person name="Chao Q."/>
            <person name="Chen H."/>
            <person name="Cheuk R.F."/>
            <person name="Chin C.W."/>
            <person name="Chung M.K."/>
            <person name="Conn L."/>
            <person name="Conway A.B."/>
            <person name="Conway A.R."/>
            <person name="Creasy T.H."/>
            <person name="Dewar K."/>
            <person name="Dunn P."/>
            <person name="Etgu P."/>
            <person name="Feldblyum T.V."/>
            <person name="Feng J.-D."/>
            <person name="Fong B."/>
            <person name="Fujii C.Y."/>
            <person name="Gill J.E."/>
            <person name="Goldsmith A.D."/>
            <person name="Haas B."/>
            <person name="Hansen N.F."/>
            <person name="Hughes B."/>
            <person name="Huizar L."/>
            <person name="Hunter J.L."/>
            <person name="Jenkins J."/>
            <person name="Johnson-Hopson C."/>
            <person name="Khan S."/>
            <person name="Khaykin E."/>
            <person name="Kim C.J."/>
            <person name="Koo H.L."/>
            <person name="Kremenetskaia I."/>
            <person name="Kurtz D.B."/>
            <person name="Kwan A."/>
            <person name="Lam B."/>
            <person name="Langin-Hooper S."/>
            <person name="Lee A."/>
            <person name="Lee J.M."/>
            <person name="Lenz C.A."/>
            <person name="Li J.H."/>
            <person name="Li Y.-P."/>
            <person name="Lin X."/>
            <person name="Liu S.X."/>
            <person name="Liu Z.A."/>
            <person name="Luros J.S."/>
            <person name="Maiti R."/>
            <person name="Marziali A."/>
            <person name="Militscher J."/>
            <person name="Miranda M."/>
            <person name="Nguyen M."/>
            <person name="Nierman W.C."/>
            <person name="Osborne B.I."/>
            <person name="Pai G."/>
            <person name="Peterson J."/>
            <person name="Pham P.K."/>
            <person name="Rizzo M."/>
            <person name="Rooney T."/>
            <person name="Rowley D."/>
            <person name="Sakano H."/>
            <person name="Salzberg S.L."/>
            <person name="Schwartz J.R."/>
            <person name="Shinn P."/>
            <person name="Southwick A.M."/>
            <person name="Sun H."/>
            <person name="Tallon L.J."/>
            <person name="Tambunga G."/>
            <person name="Toriumi M.J."/>
            <person name="Town C.D."/>
            <person name="Utterback T."/>
            <person name="Van Aken S."/>
            <person name="Vaysberg M."/>
            <person name="Vysotskaia V.S."/>
            <person name="Walker M."/>
            <person name="Wu D."/>
            <person name="Yu G."/>
            <person name="Fraser C.M."/>
            <person name="Venter J.C."/>
            <person name="Davis R.W."/>
        </authorList>
    </citation>
    <scope>NUCLEOTIDE SEQUENCE [LARGE SCALE GENOMIC DNA]</scope>
    <source>
        <strain>cv. Columbia</strain>
    </source>
</reference>
<reference key="2">
    <citation type="journal article" date="2017" name="Plant J.">
        <title>Araport11: a complete reannotation of the Arabidopsis thaliana reference genome.</title>
        <authorList>
            <person name="Cheng C.Y."/>
            <person name="Krishnakumar V."/>
            <person name="Chan A.P."/>
            <person name="Thibaud-Nissen F."/>
            <person name="Schobel S."/>
            <person name="Town C.D."/>
        </authorList>
    </citation>
    <scope>GENOME REANNOTATION</scope>
    <source>
        <strain>cv. Columbia</strain>
    </source>
</reference>
<reference key="3">
    <citation type="journal article" date="2009" name="DNA Res.">
        <title>Analysis of multiple occurrences of alternative splicing events in Arabidopsis thaliana using novel sequenced full-length cDNAs.</title>
        <authorList>
            <person name="Iida K."/>
            <person name="Fukami-Kobayashi K."/>
            <person name="Toyoda A."/>
            <person name="Sakaki Y."/>
            <person name="Kobayashi M."/>
            <person name="Seki M."/>
            <person name="Shinozaki K."/>
        </authorList>
    </citation>
    <scope>NUCLEOTIDE SEQUENCE [LARGE SCALE MRNA]</scope>
    <source>
        <strain>cv. Columbia</strain>
    </source>
</reference>
<reference key="4">
    <citation type="journal article" date="2003" name="Science">
        <title>Empirical analysis of transcriptional activity in the Arabidopsis genome.</title>
        <authorList>
            <person name="Yamada K."/>
            <person name="Lim J."/>
            <person name="Dale J.M."/>
            <person name="Chen H."/>
            <person name="Shinn P."/>
            <person name="Palm C.J."/>
            <person name="Southwick A.M."/>
            <person name="Wu H.C."/>
            <person name="Kim C.J."/>
            <person name="Nguyen M."/>
            <person name="Pham P.K."/>
            <person name="Cheuk R.F."/>
            <person name="Karlin-Newmann G."/>
            <person name="Liu S.X."/>
            <person name="Lam B."/>
            <person name="Sakano H."/>
            <person name="Wu T."/>
            <person name="Yu G."/>
            <person name="Miranda M."/>
            <person name="Quach H.L."/>
            <person name="Tripp M."/>
            <person name="Chang C.H."/>
            <person name="Lee J.M."/>
            <person name="Toriumi M.J."/>
            <person name="Chan M.M."/>
            <person name="Tang C.C."/>
            <person name="Onodera C.S."/>
            <person name="Deng J.M."/>
            <person name="Akiyama K."/>
            <person name="Ansari Y."/>
            <person name="Arakawa T."/>
            <person name="Banh J."/>
            <person name="Banno F."/>
            <person name="Bowser L."/>
            <person name="Brooks S.Y."/>
            <person name="Carninci P."/>
            <person name="Chao Q."/>
            <person name="Choy N."/>
            <person name="Enju A."/>
            <person name="Goldsmith A.D."/>
            <person name="Gurjal M."/>
            <person name="Hansen N.F."/>
            <person name="Hayashizaki Y."/>
            <person name="Johnson-Hopson C."/>
            <person name="Hsuan V.W."/>
            <person name="Iida K."/>
            <person name="Karnes M."/>
            <person name="Khan S."/>
            <person name="Koesema E."/>
            <person name="Ishida J."/>
            <person name="Jiang P.X."/>
            <person name="Jones T."/>
            <person name="Kawai J."/>
            <person name="Kamiya A."/>
            <person name="Meyers C."/>
            <person name="Nakajima M."/>
            <person name="Narusaka M."/>
            <person name="Seki M."/>
            <person name="Sakurai T."/>
            <person name="Satou M."/>
            <person name="Tamse R."/>
            <person name="Vaysberg M."/>
            <person name="Wallender E.K."/>
            <person name="Wong C."/>
            <person name="Yamamura Y."/>
            <person name="Yuan S."/>
            <person name="Shinozaki K."/>
            <person name="Davis R.W."/>
            <person name="Theologis A."/>
            <person name="Ecker J.R."/>
        </authorList>
    </citation>
    <scope>NUCLEOTIDE SEQUENCE [LARGE SCALE MRNA] OF 236-386</scope>
    <source>
        <strain>cv. Columbia</strain>
    </source>
</reference>
<reference key="5">
    <citation type="journal article" date="2002" name="J. Gen. Virol.">
        <title>Characterization of plant proteins that interact with cowpea mosaic virus '60K' protein in the yeast two-hybrid system.</title>
        <authorList>
            <person name="Carette J.E."/>
            <person name="Verver J."/>
            <person name="Martens J."/>
            <person name="van Kampen T."/>
            <person name="Wellink J."/>
            <person name="van Kammen A."/>
        </authorList>
    </citation>
    <scope>NUCLEOTIDE SEQUENCE [MRNA] OF 266-386</scope>
    <scope>INTERACTION WITH COWPEA MOSAIC VIRUS NTB PROTEIN</scope>
</reference>
<reference key="6">
    <citation type="journal article" date="2009" name="J. Proteomics">
        <title>Phosphoproteomic analysis of nuclei-enriched fractions from Arabidopsis thaliana.</title>
        <authorList>
            <person name="Jones A.M.E."/>
            <person name="MacLean D."/>
            <person name="Studholme D.J."/>
            <person name="Serna-Sanz A."/>
            <person name="Andreasson E."/>
            <person name="Rathjen J.P."/>
            <person name="Peck S.C."/>
        </authorList>
    </citation>
    <scope>IDENTIFICATION BY MASS SPECTROMETRY [LARGE SCALE ANALYSIS]</scope>
    <source>
        <strain>cv. Columbia</strain>
    </source>
</reference>
<reference key="7">
    <citation type="journal article" date="2012" name="Mol. Cell. Proteomics">
        <title>Comparative large-scale characterisation of plant vs. mammal proteins reveals similar and idiosyncratic N-alpha acetylation features.</title>
        <authorList>
            <person name="Bienvenut W.V."/>
            <person name="Sumpton D."/>
            <person name="Martinez A."/>
            <person name="Lilla S."/>
            <person name="Espagne C."/>
            <person name="Meinnel T."/>
            <person name="Giglione C."/>
        </authorList>
    </citation>
    <scope>ACETYLATION [LARGE SCALE ANALYSIS] AT MET-1</scope>
    <scope>IDENTIFICATION BY MASS SPECTROMETRY [LARGE SCALE ANALYSIS]</scope>
</reference>
<protein>
    <recommendedName>
        <fullName>Vesicle-associated protein 2-2</fullName>
    </recommendedName>
    <alternativeName>
        <fullName>Plant VAP homolog 22</fullName>
        <shortName>AtPVA22</shortName>
    </alternativeName>
    <alternativeName>
        <fullName>VAMP-associated protein 2-2</fullName>
    </alternativeName>
    <alternativeName>
        <fullName>Vesicle-associated protein 27-2</fullName>
    </alternativeName>
</protein>
<keyword id="KW-0007">Acetylation</keyword>
<keyword id="KW-0175">Coiled coil</keyword>
<keyword id="KW-0256">Endoplasmic reticulum</keyword>
<keyword id="KW-0945">Host-virus interaction</keyword>
<keyword id="KW-0472">Membrane</keyword>
<keyword id="KW-0597">Phosphoprotein</keyword>
<keyword id="KW-1185">Reference proteome</keyword>
<keyword id="KW-0812">Transmembrane</keyword>
<keyword id="KW-1133">Transmembrane helix</keyword>
<dbReference type="EMBL" id="AC003981">
    <property type="protein sequence ID" value="AAF99771.1"/>
    <property type="status" value="ALT_SEQ"/>
    <property type="molecule type" value="Genomic_DNA"/>
</dbReference>
<dbReference type="EMBL" id="CP002684">
    <property type="protein sequence ID" value="AEE28352.1"/>
    <property type="molecule type" value="Genomic_DNA"/>
</dbReference>
<dbReference type="EMBL" id="CP002684">
    <property type="protein sequence ID" value="AEE28353.1"/>
    <property type="molecule type" value="Genomic_DNA"/>
</dbReference>
<dbReference type="EMBL" id="CP002684">
    <property type="protein sequence ID" value="ANM59286.1"/>
    <property type="molecule type" value="Genomic_DNA"/>
</dbReference>
<dbReference type="EMBL" id="CP002684">
    <property type="protein sequence ID" value="ANM59287.1"/>
    <property type="molecule type" value="Genomic_DNA"/>
</dbReference>
<dbReference type="EMBL" id="CP002684">
    <property type="protein sequence ID" value="ANM59288.1"/>
    <property type="molecule type" value="Genomic_DNA"/>
</dbReference>
<dbReference type="EMBL" id="AK317489">
    <property type="protein sequence ID" value="BAH20154.1"/>
    <property type="molecule type" value="mRNA"/>
</dbReference>
<dbReference type="EMBL" id="AK317626">
    <property type="protein sequence ID" value="BAH20288.1"/>
    <property type="molecule type" value="mRNA"/>
</dbReference>
<dbReference type="EMBL" id="AY074512">
    <property type="protein sequence ID" value="AAL67126.1"/>
    <property type="molecule type" value="mRNA"/>
</dbReference>
<dbReference type="EMBL" id="AY364004">
    <property type="protein sequence ID" value="AAQ63967.1"/>
    <property type="molecule type" value="mRNA"/>
</dbReference>
<dbReference type="PIR" id="B86220">
    <property type="entry name" value="B86220"/>
</dbReference>
<dbReference type="PIR" id="T00738">
    <property type="entry name" value="T00738"/>
</dbReference>
<dbReference type="RefSeq" id="NP_001031004.1">
    <property type="nucleotide sequence ID" value="NM_001035927.2"/>
</dbReference>
<dbReference type="RefSeq" id="NP_001321655.1">
    <property type="nucleotide sequence ID" value="NM_001331792.1"/>
</dbReference>
<dbReference type="RefSeq" id="NP_001321656.1">
    <property type="nucleotide sequence ID" value="NM_001331793.1"/>
</dbReference>
<dbReference type="RefSeq" id="NP_001321657.1">
    <property type="nucleotide sequence ID" value="NM_001331791.1"/>
</dbReference>
<dbReference type="RefSeq" id="NP_172359.2">
    <property type="nucleotide sequence ID" value="NM_100756.2"/>
</dbReference>
<dbReference type="SMR" id="B9DHD7"/>
<dbReference type="BioGRID" id="22645">
    <property type="interactions" value="8"/>
</dbReference>
<dbReference type="FunCoup" id="B9DHD7">
    <property type="interactions" value="2672"/>
</dbReference>
<dbReference type="IntAct" id="B9DHD7">
    <property type="interactions" value="4"/>
</dbReference>
<dbReference type="STRING" id="3702.B9DHD7"/>
<dbReference type="iPTMnet" id="B9DHD7"/>
<dbReference type="PaxDb" id="3702-AT1G08820.1"/>
<dbReference type="ProteomicsDB" id="242312"/>
<dbReference type="EnsemblPlants" id="AT1G08820.1">
    <property type="protein sequence ID" value="AT1G08820.1"/>
    <property type="gene ID" value="AT1G08820"/>
</dbReference>
<dbReference type="EnsemblPlants" id="AT1G08820.2">
    <property type="protein sequence ID" value="AT1G08820.2"/>
    <property type="gene ID" value="AT1G08820"/>
</dbReference>
<dbReference type="EnsemblPlants" id="AT1G08820.3">
    <property type="protein sequence ID" value="AT1G08820.3"/>
    <property type="gene ID" value="AT1G08820"/>
</dbReference>
<dbReference type="EnsemblPlants" id="AT1G08820.4">
    <property type="protein sequence ID" value="AT1G08820.4"/>
    <property type="gene ID" value="AT1G08820"/>
</dbReference>
<dbReference type="EnsemblPlants" id="AT1G08820.5">
    <property type="protein sequence ID" value="AT1G08820.5"/>
    <property type="gene ID" value="AT1G08820"/>
</dbReference>
<dbReference type="GeneID" id="837404"/>
<dbReference type="Gramene" id="AT1G08820.1">
    <property type="protein sequence ID" value="AT1G08820.1"/>
    <property type="gene ID" value="AT1G08820"/>
</dbReference>
<dbReference type="Gramene" id="AT1G08820.2">
    <property type="protein sequence ID" value="AT1G08820.2"/>
    <property type="gene ID" value="AT1G08820"/>
</dbReference>
<dbReference type="Gramene" id="AT1G08820.3">
    <property type="protein sequence ID" value="AT1G08820.3"/>
    <property type="gene ID" value="AT1G08820"/>
</dbReference>
<dbReference type="Gramene" id="AT1G08820.4">
    <property type="protein sequence ID" value="AT1G08820.4"/>
    <property type="gene ID" value="AT1G08820"/>
</dbReference>
<dbReference type="Gramene" id="AT1G08820.5">
    <property type="protein sequence ID" value="AT1G08820.5"/>
    <property type="gene ID" value="AT1G08820"/>
</dbReference>
<dbReference type="KEGG" id="ath:AT1G08820"/>
<dbReference type="Araport" id="AT1G08820"/>
<dbReference type="TAIR" id="AT1G08820">
    <property type="gene designation" value="VAP27-2"/>
</dbReference>
<dbReference type="eggNOG" id="KOG0439">
    <property type="taxonomic scope" value="Eukaryota"/>
</dbReference>
<dbReference type="HOGENOM" id="CLU_036554_0_0_1"/>
<dbReference type="InParanoid" id="B9DHD7"/>
<dbReference type="OMA" id="RSISFQH"/>
<dbReference type="PhylomeDB" id="B9DHD7"/>
<dbReference type="PRO" id="PR:B9DHD7"/>
<dbReference type="Proteomes" id="UP000006548">
    <property type="component" value="Chromosome 1"/>
</dbReference>
<dbReference type="ExpressionAtlas" id="B9DHD7">
    <property type="expression patterns" value="baseline and differential"/>
</dbReference>
<dbReference type="GO" id="GO:0005789">
    <property type="term" value="C:endoplasmic reticulum membrane"/>
    <property type="evidence" value="ECO:0000314"/>
    <property type="project" value="TAIR"/>
</dbReference>
<dbReference type="GO" id="GO:0005576">
    <property type="term" value="C:extracellular region"/>
    <property type="evidence" value="ECO:0007005"/>
    <property type="project" value="TAIR"/>
</dbReference>
<dbReference type="GO" id="GO:0005886">
    <property type="term" value="C:plasma membrane"/>
    <property type="evidence" value="ECO:0007005"/>
    <property type="project" value="TAIR"/>
</dbReference>
<dbReference type="GO" id="GO:0046907">
    <property type="term" value="P:intracellular transport"/>
    <property type="evidence" value="ECO:0000304"/>
    <property type="project" value="TAIR"/>
</dbReference>
<dbReference type="FunFam" id="2.60.40.10:FF:000813">
    <property type="entry name" value="Vesicle-associated protein 1-1"/>
    <property type="match status" value="1"/>
</dbReference>
<dbReference type="Gene3D" id="2.60.40.10">
    <property type="entry name" value="Immunoglobulins"/>
    <property type="match status" value="1"/>
</dbReference>
<dbReference type="InterPro" id="IPR013783">
    <property type="entry name" value="Ig-like_fold"/>
</dbReference>
<dbReference type="InterPro" id="IPR000535">
    <property type="entry name" value="MSP_dom"/>
</dbReference>
<dbReference type="InterPro" id="IPR008962">
    <property type="entry name" value="PapD-like_sf"/>
</dbReference>
<dbReference type="InterPro" id="IPR016763">
    <property type="entry name" value="VAP"/>
</dbReference>
<dbReference type="PANTHER" id="PTHR10809">
    <property type="entry name" value="VESICLE-ASSOCIATED MEMBRANE PROTEIN-ASSOCIATED PROTEIN"/>
    <property type="match status" value="1"/>
</dbReference>
<dbReference type="PANTHER" id="PTHR10809:SF45">
    <property type="entry name" value="VESICLE-ASSOCIATED PROTEIN 2-2"/>
    <property type="match status" value="1"/>
</dbReference>
<dbReference type="Pfam" id="PF00635">
    <property type="entry name" value="Motile_Sperm"/>
    <property type="match status" value="1"/>
</dbReference>
<dbReference type="SUPFAM" id="SSF49354">
    <property type="entry name" value="PapD-like"/>
    <property type="match status" value="1"/>
</dbReference>
<dbReference type="PROSITE" id="PS50202">
    <property type="entry name" value="MSP"/>
    <property type="match status" value="1"/>
</dbReference>
<sequence length="386" mass="43270">MNMPLLDIQPRTLQFAVDLKKQTSCVVQLTNTTHHYVAFKVKTTSPKKYCVRPNVGVVAPKSTCEFTVIMQAFKEPPPDMVCKDKFLIQSTAVSAETTDEDITASMFSKAEGKHIEENKLRVTLVPPSDSPELSPINTPKQGAVFEDSILKDRLYSQSETLAPPQYEGEIVKEPRMVGHDELKAADNAKELKTPKMATVDFVEDRYTANDLKATKDSYDSSRMAKETGFDPIRSHKDADDGRAIKATTNLDAPMKKAMDLPRDQGFTNGIAVDSEPKISKERDVVQLQKTDGQNVRGLDELKLVKDIEEMKLKVDALESKLKQADSTISKLMEERSISSQHRQSLQHELAELRTKKIVKEVHNGFPLLYVCVVAFIAYVIGHFLRT</sequence>
<evidence type="ECO:0000250" key="1"/>
<evidence type="ECO:0000250" key="2">
    <source>
        <dbReference type="UniProtKB" id="Q9SHC8"/>
    </source>
</evidence>
<evidence type="ECO:0000255" key="3"/>
<evidence type="ECO:0000255" key="4">
    <source>
        <dbReference type="PROSITE-ProRule" id="PRU00132"/>
    </source>
</evidence>
<evidence type="ECO:0000269" key="5">
    <source>
    </source>
</evidence>
<evidence type="ECO:0000305" key="6"/>
<evidence type="ECO:0007744" key="7">
    <source>
    </source>
</evidence>
<comment type="function">
    <text evidence="1">May play a role in vesicle trafficking.</text>
</comment>
<comment type="subunit">
    <text evidence="5">Interacts with cowpea mosaic virus (CPMV) NTP-binding protein (NTB).</text>
</comment>
<comment type="subcellular location">
    <subcellularLocation>
        <location evidence="1">Endoplasmic reticulum membrane</location>
        <topology evidence="1">Single-pass type IV membrane protein</topology>
        <orientation evidence="1">Cytoplasmic side</orientation>
    </subcellularLocation>
</comment>
<comment type="similarity">
    <text evidence="6">Belongs to the VAMP-associated protein (VAP) (TC 9.B.17) family.</text>
</comment>
<comment type="sequence caution" evidence="6">
    <conflict type="erroneous gene model prediction">
        <sequence resource="EMBL-CDS" id="AAF99771"/>
    </conflict>
</comment>
<name>VAP22_ARATH</name>
<proteinExistence type="evidence at protein level"/>
<accession>B9DHD7</accession>
<accession>Q6UQE9</accession>
<accession>Q8VXW8</accession>
<accession>Q9FRQ7</accession>
<gene>
    <name type="primary">PVA22</name>
    <name type="synonym">VAP27-2</name>
    <name type="ordered locus">At1g08820</name>
    <name type="ORF">F22O13.31</name>
</gene>